<accession>P25094</accession>
<feature type="chain" id="PRO_0000164652" description="Peripheral myelin protein 22">
    <location>
        <begin position="1"/>
        <end position="160"/>
    </location>
</feature>
<feature type="topological domain" description="Cytoplasmic" evidence="3">
    <location>
        <position position="1"/>
    </location>
</feature>
<feature type="transmembrane region" description="Helical" evidence="1">
    <location>
        <begin position="2"/>
        <end position="31"/>
    </location>
</feature>
<feature type="topological domain" description="Extracellular" evidence="3">
    <location>
        <begin position="32"/>
        <end position="64"/>
    </location>
</feature>
<feature type="transmembrane region" description="Helical" evidence="1">
    <location>
        <begin position="65"/>
        <end position="91"/>
    </location>
</feature>
<feature type="topological domain" description="Cytoplasmic" evidence="3">
    <location>
        <begin position="92"/>
        <end position="95"/>
    </location>
</feature>
<feature type="transmembrane region" description="Helical" evidence="1">
    <location>
        <begin position="96"/>
        <end position="119"/>
    </location>
</feature>
<feature type="topological domain" description="Extracellular" evidence="3">
    <location>
        <begin position="120"/>
        <end position="133"/>
    </location>
</feature>
<feature type="transmembrane region" description="Helical" evidence="1">
    <location>
        <begin position="134"/>
        <end position="156"/>
    </location>
</feature>
<feature type="topological domain" description="Cytoplasmic" evidence="3">
    <location>
        <begin position="157"/>
        <end position="160"/>
    </location>
</feature>
<feature type="glycosylation site" description="N-linked (GlcNAc...) asparagine" evidence="3">
    <location>
        <position position="41"/>
    </location>
</feature>
<feature type="sequence conflict" description="In Ref. 4; AA sequence." evidence="5" ref="4">
    <original>S</original>
    <variation>K</variation>
    <location>
        <position position="22"/>
    </location>
</feature>
<feature type="sequence conflict" description="In Ref. 1; CAA44297." evidence="5" ref="1">
    <original>V</original>
    <variation>E</variation>
    <location>
        <position position="30"/>
    </location>
</feature>
<organism>
    <name type="scientific">Rattus norvegicus</name>
    <name type="common">Rat</name>
    <dbReference type="NCBI Taxonomy" id="10116"/>
    <lineage>
        <taxon>Eukaryota</taxon>
        <taxon>Metazoa</taxon>
        <taxon>Chordata</taxon>
        <taxon>Craniata</taxon>
        <taxon>Vertebrata</taxon>
        <taxon>Euteleostomi</taxon>
        <taxon>Mammalia</taxon>
        <taxon>Eutheria</taxon>
        <taxon>Euarchontoglires</taxon>
        <taxon>Glires</taxon>
        <taxon>Rodentia</taxon>
        <taxon>Myomorpha</taxon>
        <taxon>Muroidea</taxon>
        <taxon>Muridae</taxon>
        <taxon>Murinae</taxon>
        <taxon>Rattus</taxon>
    </lineage>
</organism>
<reference key="1">
    <citation type="journal article" date="1991" name="EMBO J.">
        <title>Axon-regulated expression of a Schwann cell transcript that is homologous to a 'growth arrest-specific' gene.</title>
        <authorList>
            <person name="Spreyer P."/>
            <person name="Kuhn G."/>
            <person name="Hanemann C.O."/>
            <person name="Gillen C."/>
            <person name="Schaal H."/>
            <person name="Kuhn R."/>
            <person name="Lemke G."/>
            <person name="Mueller H.W."/>
        </authorList>
    </citation>
    <scope>NUCLEOTIDE SEQUENCE [MRNA]</scope>
    <source>
        <strain>Wistar</strain>
        <tissue>Sciatic nerve</tissue>
    </source>
</reference>
<reference key="2">
    <citation type="journal article" date="1991" name="Proc. Natl. Acad. Sci. U.S.A.">
        <title>A myelin protein is encoded by the homologue of a growth arrest-specific gene.</title>
        <authorList>
            <person name="Welcher A.A."/>
            <person name="Suter U."/>
            <person name="de Leon M."/>
            <person name="Snipes G.J."/>
            <person name="Shooter E.M."/>
        </authorList>
    </citation>
    <scope>NUCLEOTIDE SEQUENCE [MRNA]</scope>
    <source>
        <tissue>Sciatic nerve</tissue>
    </source>
</reference>
<reference key="3">
    <citation type="journal article" date="1992" name="Prog. Brain Res.">
        <title>Isolation of transcriptionally regulated sequences associated with neuronal and non-neuronal cell interactions.</title>
        <authorList>
            <person name="Welcher A.A."/>
            <person name="de Leon M."/>
            <person name="Suter U."/>
            <person name="Snipes G.J."/>
            <person name="Meakin S.O."/>
            <person name="Shooter E.M."/>
        </authorList>
    </citation>
    <scope>NUCLEOTIDE SEQUENCE [MRNA]</scope>
</reference>
<reference key="4">
    <citation type="journal article" date="1992" name="J. Neurosci.">
        <title>SAG: a Schwann cell membrane glycoprotein.</title>
        <authorList>
            <person name="Dieperink M.E."/>
            <person name="O'Neill A."/>
            <person name="Magnoni G."/>
            <person name="Wollmann R.L."/>
            <person name="Heinrikson R.L."/>
            <person name="Zucher-Neely H.A."/>
            <person name="Stefansson K."/>
        </authorList>
    </citation>
    <scope>PROTEIN SEQUENCE OF 1-30</scope>
    <scope>TISSUE SPECIFICITY</scope>
    <scope>DEVELOPMENTAL STAGE</scope>
</reference>
<proteinExistence type="evidence at protein level"/>
<comment type="function">
    <text>Might be involved in growth regulation, and in myelinization in the peripheral nervous system.</text>
</comment>
<comment type="subcellular location">
    <subcellularLocation>
        <location evidence="1">Cell membrane</location>
        <topology evidence="1">Multi-pass membrane protein</topology>
    </subcellularLocation>
</comment>
<comment type="tissue specificity">
    <text evidence="4">Found exclusively in the peripheral nervous system. Present in both myelinating and nonmyelinating Schwann cells. Found in the tumors of Schwann cell lineage where axons are present (neurofibromas) but not where axons are absent (schwannomas).</text>
</comment>
<comment type="developmental stage">
    <text evidence="4">Levels increase between embryonic day 21 (21 dpc) and postnatal day 1 (P1) and then gradually increase up to P15. There is a slight increase between P15 and adulthood.</text>
</comment>
<comment type="induction">
    <text>Strongly down-regulated in the initial phase after sciatic nerve injury.</text>
</comment>
<comment type="PTM">
    <text evidence="2">Ubiquitinated by the DCX(DCAF13) E3 ubiquitin ligase complex, leading to its degradation.</text>
</comment>
<comment type="similarity">
    <text evidence="5">Belongs to the PMP-22/EMP/MP20 family.</text>
</comment>
<dbReference type="EMBL" id="X62431">
    <property type="protein sequence ID" value="CAA44297.1"/>
    <property type="molecule type" value="mRNA"/>
</dbReference>
<dbReference type="EMBL" id="M69139">
    <property type="protein sequence ID" value="AAA73063.1"/>
    <property type="molecule type" value="mRNA"/>
</dbReference>
<dbReference type="EMBL" id="S55427">
    <property type="protein sequence ID" value="AAB25374.1"/>
    <property type="molecule type" value="mRNA"/>
</dbReference>
<dbReference type="PIR" id="A41144">
    <property type="entry name" value="A41144"/>
</dbReference>
<dbReference type="RefSeq" id="NP_001416879.1">
    <property type="nucleotide sequence ID" value="NM_001429950.1"/>
</dbReference>
<dbReference type="RefSeq" id="NP_001416880.1">
    <property type="nucleotide sequence ID" value="NM_001429951.1"/>
</dbReference>
<dbReference type="RefSeq" id="NP_058733.2">
    <property type="nucleotide sequence ID" value="NM_017037.2"/>
</dbReference>
<dbReference type="RefSeq" id="XP_006246646.1">
    <property type="nucleotide sequence ID" value="XM_006246584.3"/>
</dbReference>
<dbReference type="SMR" id="P25094"/>
<dbReference type="FunCoup" id="P25094">
    <property type="interactions" value="190"/>
</dbReference>
<dbReference type="STRING" id="10116.ENSRNOP00000069909"/>
<dbReference type="ChEMBL" id="CHEMBL2007624"/>
<dbReference type="GlyCosmos" id="P25094">
    <property type="glycosylation" value="1 site, No reported glycans"/>
</dbReference>
<dbReference type="GlyGen" id="P25094">
    <property type="glycosylation" value="1 site"/>
</dbReference>
<dbReference type="PhosphoSitePlus" id="P25094"/>
<dbReference type="PaxDb" id="10116-ENSRNOP00000051201"/>
<dbReference type="Ensembl" id="ENSRNOT00000081415.2">
    <property type="protein sequence ID" value="ENSRNOP00000069909.1"/>
    <property type="gene ID" value="ENSRNOG00000003338.7"/>
</dbReference>
<dbReference type="GeneID" id="24660"/>
<dbReference type="KEGG" id="rno:24660"/>
<dbReference type="UCSC" id="RGD:3359">
    <property type="organism name" value="rat"/>
</dbReference>
<dbReference type="AGR" id="RGD:3359"/>
<dbReference type="CTD" id="5376"/>
<dbReference type="RGD" id="3359">
    <property type="gene designation" value="Pmp22"/>
</dbReference>
<dbReference type="eggNOG" id="ENOG502S0F5">
    <property type="taxonomic scope" value="Eukaryota"/>
</dbReference>
<dbReference type="GeneTree" id="ENSGT00950000182696"/>
<dbReference type="InParanoid" id="P25094"/>
<dbReference type="OMA" id="HTADLWQ"/>
<dbReference type="OrthoDB" id="6084046at2759"/>
<dbReference type="PhylomeDB" id="P25094"/>
<dbReference type="TreeFam" id="TF330414"/>
<dbReference type="PRO" id="PR:P25094"/>
<dbReference type="Proteomes" id="UP000002494">
    <property type="component" value="Chromosome 10"/>
</dbReference>
<dbReference type="Bgee" id="ENSRNOG00000003338">
    <property type="expression patterns" value="Expressed in lung and 20 other cell types or tissues"/>
</dbReference>
<dbReference type="GO" id="GO:0005923">
    <property type="term" value="C:bicellular tight junction"/>
    <property type="evidence" value="ECO:0000314"/>
    <property type="project" value="RGD"/>
</dbReference>
<dbReference type="GO" id="GO:0009986">
    <property type="term" value="C:cell surface"/>
    <property type="evidence" value="ECO:0000266"/>
    <property type="project" value="RGD"/>
</dbReference>
<dbReference type="GO" id="GO:0043218">
    <property type="term" value="C:compact myelin"/>
    <property type="evidence" value="ECO:0000314"/>
    <property type="project" value="RGD"/>
</dbReference>
<dbReference type="GO" id="GO:0008305">
    <property type="term" value="C:integrin complex"/>
    <property type="evidence" value="ECO:0000266"/>
    <property type="project" value="RGD"/>
</dbReference>
<dbReference type="GO" id="GO:0043256">
    <property type="term" value="C:laminin complex"/>
    <property type="evidence" value="ECO:0000266"/>
    <property type="project" value="RGD"/>
</dbReference>
<dbReference type="GO" id="GO:0016020">
    <property type="term" value="C:membrane"/>
    <property type="evidence" value="ECO:0000266"/>
    <property type="project" value="RGD"/>
</dbReference>
<dbReference type="GO" id="GO:0048471">
    <property type="term" value="C:perinuclear region of cytoplasm"/>
    <property type="evidence" value="ECO:0000266"/>
    <property type="project" value="RGD"/>
</dbReference>
<dbReference type="GO" id="GO:0005886">
    <property type="term" value="C:plasma membrane"/>
    <property type="evidence" value="ECO:0000266"/>
    <property type="project" value="RGD"/>
</dbReference>
<dbReference type="GO" id="GO:0003774">
    <property type="term" value="F:cytoskeletal motor activity"/>
    <property type="evidence" value="ECO:0000266"/>
    <property type="project" value="RGD"/>
</dbReference>
<dbReference type="GO" id="GO:0030291">
    <property type="term" value="F:protein serine/threonine kinase inhibitor activity"/>
    <property type="evidence" value="ECO:0000266"/>
    <property type="project" value="RGD"/>
</dbReference>
<dbReference type="GO" id="GO:0030036">
    <property type="term" value="P:actin cytoskeleton organization"/>
    <property type="evidence" value="ECO:0000266"/>
    <property type="project" value="RGD"/>
</dbReference>
<dbReference type="GO" id="GO:0008344">
    <property type="term" value="P:adult locomotory behavior"/>
    <property type="evidence" value="ECO:0000266"/>
    <property type="project" value="RGD"/>
</dbReference>
<dbReference type="GO" id="GO:0007628">
    <property type="term" value="P:adult walking behavior"/>
    <property type="evidence" value="ECO:0000266"/>
    <property type="project" value="RGD"/>
</dbReference>
<dbReference type="GO" id="GO:0070842">
    <property type="term" value="P:aggresome assembly"/>
    <property type="evidence" value="ECO:0000266"/>
    <property type="project" value="RGD"/>
</dbReference>
<dbReference type="GO" id="GO:0006915">
    <property type="term" value="P:apoptotic process"/>
    <property type="evidence" value="ECO:0000266"/>
    <property type="project" value="RGD"/>
</dbReference>
<dbReference type="GO" id="GO:0006914">
    <property type="term" value="P:autophagy"/>
    <property type="evidence" value="ECO:0000266"/>
    <property type="project" value="RGD"/>
</dbReference>
<dbReference type="GO" id="GO:0061564">
    <property type="term" value="P:axon development"/>
    <property type="evidence" value="ECO:0000266"/>
    <property type="project" value="RGD"/>
</dbReference>
<dbReference type="GO" id="GO:0071711">
    <property type="term" value="P:basement membrane organization"/>
    <property type="evidence" value="ECO:0000266"/>
    <property type="project" value="RGD"/>
</dbReference>
<dbReference type="GO" id="GO:0032060">
    <property type="term" value="P:bleb assembly"/>
    <property type="evidence" value="ECO:0000266"/>
    <property type="project" value="RGD"/>
</dbReference>
<dbReference type="GO" id="GO:0007155">
    <property type="term" value="P:cell adhesion"/>
    <property type="evidence" value="ECO:0000266"/>
    <property type="project" value="RGD"/>
</dbReference>
<dbReference type="GO" id="GO:0030154">
    <property type="term" value="P:cell differentiation"/>
    <property type="evidence" value="ECO:0000314"/>
    <property type="project" value="RGD"/>
</dbReference>
<dbReference type="GO" id="GO:0034605">
    <property type="term" value="P:cellular response to heat"/>
    <property type="evidence" value="ECO:0000266"/>
    <property type="project" value="RGD"/>
</dbReference>
<dbReference type="GO" id="GO:0034620">
    <property type="term" value="P:cellular response to unfolded protein"/>
    <property type="evidence" value="ECO:0000266"/>
    <property type="project" value="RGD"/>
</dbReference>
<dbReference type="GO" id="GO:0008203">
    <property type="term" value="P:cholesterol metabolic process"/>
    <property type="evidence" value="ECO:0000266"/>
    <property type="project" value="RGD"/>
</dbReference>
<dbReference type="GO" id="GO:0010761">
    <property type="term" value="P:fibroblast migration"/>
    <property type="evidence" value="ECO:0000266"/>
    <property type="project" value="RGD"/>
</dbReference>
<dbReference type="GO" id="GO:0042063">
    <property type="term" value="P:gliogenesis"/>
    <property type="evidence" value="ECO:0000266"/>
    <property type="project" value="RGD"/>
</dbReference>
<dbReference type="GO" id="GO:0006955">
    <property type="term" value="P:immune response"/>
    <property type="evidence" value="ECO:0000266"/>
    <property type="project" value="RGD"/>
</dbReference>
<dbReference type="GO" id="GO:0030032">
    <property type="term" value="P:lamellipodium assembly"/>
    <property type="evidence" value="ECO:0000266"/>
    <property type="project" value="RGD"/>
</dbReference>
<dbReference type="GO" id="GO:0006629">
    <property type="term" value="P:lipid metabolic process"/>
    <property type="evidence" value="ECO:0000266"/>
    <property type="project" value="RGD"/>
</dbReference>
<dbReference type="GO" id="GO:0007618">
    <property type="term" value="P:mating"/>
    <property type="evidence" value="ECO:0000266"/>
    <property type="project" value="RGD"/>
</dbReference>
<dbReference type="GO" id="GO:0031579">
    <property type="term" value="P:membrane raft organization"/>
    <property type="evidence" value="ECO:0000266"/>
    <property type="project" value="RGD"/>
</dbReference>
<dbReference type="GO" id="GO:0061744">
    <property type="term" value="P:motor behavior"/>
    <property type="evidence" value="ECO:0000266"/>
    <property type="project" value="RGD"/>
</dbReference>
<dbReference type="GO" id="GO:0035264">
    <property type="term" value="P:multicellular organism growth"/>
    <property type="evidence" value="ECO:0000266"/>
    <property type="project" value="RGD"/>
</dbReference>
<dbReference type="GO" id="GO:0055001">
    <property type="term" value="P:muscle cell development"/>
    <property type="evidence" value="ECO:0000266"/>
    <property type="project" value="RGD"/>
</dbReference>
<dbReference type="GO" id="GO:0032288">
    <property type="term" value="P:myelin assembly"/>
    <property type="evidence" value="ECO:0000266"/>
    <property type="project" value="RGD"/>
</dbReference>
<dbReference type="GO" id="GO:0042552">
    <property type="term" value="P:myelination"/>
    <property type="evidence" value="ECO:0000314"/>
    <property type="project" value="RGD"/>
</dbReference>
<dbReference type="GO" id="GO:0022011">
    <property type="term" value="P:myelination in peripheral nervous system"/>
    <property type="evidence" value="ECO:0000266"/>
    <property type="project" value="RGD"/>
</dbReference>
<dbReference type="GO" id="GO:0008285">
    <property type="term" value="P:negative regulation of cell population proliferation"/>
    <property type="evidence" value="ECO:0000314"/>
    <property type="project" value="BHF-UCL"/>
</dbReference>
<dbReference type="GO" id="GO:0010629">
    <property type="term" value="P:negative regulation of gene expression"/>
    <property type="evidence" value="ECO:0000266"/>
    <property type="project" value="RGD"/>
</dbReference>
<dbReference type="GO" id="GO:0010977">
    <property type="term" value="P:negative regulation of neuron projection development"/>
    <property type="evidence" value="ECO:0000314"/>
    <property type="project" value="BHF-UCL"/>
</dbReference>
<dbReference type="GO" id="GO:0098529">
    <property type="term" value="P:neuromuscular junction development, skeletal muscle fiber"/>
    <property type="evidence" value="ECO:0000266"/>
    <property type="project" value="RGD"/>
</dbReference>
<dbReference type="GO" id="GO:0050905">
    <property type="term" value="P:neuromuscular process"/>
    <property type="evidence" value="ECO:0000266"/>
    <property type="project" value="RGD"/>
</dbReference>
<dbReference type="GO" id="GO:0019228">
    <property type="term" value="P:neuronal action potential"/>
    <property type="evidence" value="ECO:0000266"/>
    <property type="project" value="RGD"/>
</dbReference>
<dbReference type="GO" id="GO:0019227">
    <property type="term" value="P:neuronal action potential propagation"/>
    <property type="evidence" value="ECO:0000266"/>
    <property type="project" value="RGD"/>
</dbReference>
<dbReference type="GO" id="GO:0045161">
    <property type="term" value="P:neuronal ion channel clustering"/>
    <property type="evidence" value="ECO:0000266"/>
    <property type="project" value="RGD"/>
</dbReference>
<dbReference type="GO" id="GO:0030913">
    <property type="term" value="P:paranodal junction assembly"/>
    <property type="evidence" value="ECO:0000266"/>
    <property type="project" value="RGD"/>
</dbReference>
<dbReference type="GO" id="GO:0007422">
    <property type="term" value="P:peripheral nervous system development"/>
    <property type="evidence" value="ECO:0000266"/>
    <property type="project" value="RGD"/>
</dbReference>
<dbReference type="GO" id="GO:0048936">
    <property type="term" value="P:peripheral nervous system neuron axonogenesis"/>
    <property type="evidence" value="ECO:0000266"/>
    <property type="project" value="RGD"/>
</dbReference>
<dbReference type="GO" id="GO:0010628">
    <property type="term" value="P:positive regulation of gene expression"/>
    <property type="evidence" value="ECO:0000266"/>
    <property type="project" value="RGD"/>
</dbReference>
<dbReference type="GO" id="GO:0010498">
    <property type="term" value="P:proteasomal protein catabolic process"/>
    <property type="evidence" value="ECO:0000266"/>
    <property type="project" value="RGD"/>
</dbReference>
<dbReference type="GO" id="GO:0043161">
    <property type="term" value="P:proteasome-mediated ubiquitin-dependent protein catabolic process"/>
    <property type="evidence" value="ECO:0000266"/>
    <property type="project" value="RGD"/>
</dbReference>
<dbReference type="GO" id="GO:2001233">
    <property type="term" value="P:regulation of apoptotic signaling pathway"/>
    <property type="evidence" value="ECO:0000266"/>
    <property type="project" value="RGD"/>
</dbReference>
<dbReference type="GO" id="GO:0051726">
    <property type="term" value="P:regulation of cell cycle"/>
    <property type="evidence" value="ECO:0007669"/>
    <property type="project" value="UniProtKB-KW"/>
</dbReference>
<dbReference type="GO" id="GO:0010468">
    <property type="term" value="P:regulation of gene expression"/>
    <property type="evidence" value="ECO:0000266"/>
    <property type="project" value="RGD"/>
</dbReference>
<dbReference type="GO" id="GO:0034350">
    <property type="term" value="P:regulation of glial cell apoptotic process"/>
    <property type="evidence" value="ECO:0000266"/>
    <property type="project" value="RGD"/>
</dbReference>
<dbReference type="GO" id="GO:0050727">
    <property type="term" value="P:regulation of inflammatory response"/>
    <property type="evidence" value="ECO:0000266"/>
    <property type="project" value="RGD"/>
</dbReference>
<dbReference type="GO" id="GO:0010624">
    <property type="term" value="P:regulation of Schwann cell proliferation"/>
    <property type="evidence" value="ECO:0000266"/>
    <property type="project" value="RGD"/>
</dbReference>
<dbReference type="GO" id="GO:0009617">
    <property type="term" value="P:response to bacterium"/>
    <property type="evidence" value="ECO:0000266"/>
    <property type="project" value="RGD"/>
</dbReference>
<dbReference type="GO" id="GO:0034976">
    <property type="term" value="P:response to endoplasmic reticulum stress"/>
    <property type="evidence" value="ECO:0000266"/>
    <property type="project" value="RGD"/>
</dbReference>
<dbReference type="GO" id="GO:0014044">
    <property type="term" value="P:Schwann cell development"/>
    <property type="evidence" value="ECO:0000266"/>
    <property type="project" value="RGD"/>
</dbReference>
<dbReference type="GO" id="GO:0014037">
    <property type="term" value="P:Schwann cell differentiation"/>
    <property type="evidence" value="ECO:0000266"/>
    <property type="project" value="RGD"/>
</dbReference>
<dbReference type="GO" id="GO:0036135">
    <property type="term" value="P:Schwann cell migration"/>
    <property type="evidence" value="ECO:0000266"/>
    <property type="project" value="RGD"/>
</dbReference>
<dbReference type="GO" id="GO:0051146">
    <property type="term" value="P:striated muscle cell differentiation"/>
    <property type="evidence" value="ECO:0000266"/>
    <property type="project" value="RGD"/>
</dbReference>
<dbReference type="GO" id="GO:0019226">
    <property type="term" value="P:transmission of nerve impulse"/>
    <property type="evidence" value="ECO:0000266"/>
    <property type="project" value="RGD"/>
</dbReference>
<dbReference type="GO" id="GO:0060005">
    <property type="term" value="P:vestibular reflex"/>
    <property type="evidence" value="ECO:0000266"/>
    <property type="project" value="RGD"/>
</dbReference>
<dbReference type="FunFam" id="1.20.140.150:FF:000019">
    <property type="entry name" value="Peripheral myelin protein 22"/>
    <property type="match status" value="1"/>
</dbReference>
<dbReference type="Gene3D" id="1.20.140.150">
    <property type="match status" value="1"/>
</dbReference>
<dbReference type="InterPro" id="IPR050579">
    <property type="entry name" value="PMP-22/EMP/MP20-like"/>
</dbReference>
<dbReference type="InterPro" id="IPR003936">
    <property type="entry name" value="PMP22"/>
</dbReference>
<dbReference type="InterPro" id="IPR004031">
    <property type="entry name" value="PMP22/EMP/MP20/Claudin"/>
</dbReference>
<dbReference type="InterPro" id="IPR004032">
    <property type="entry name" value="PMP22_EMP_MP20"/>
</dbReference>
<dbReference type="PANTHER" id="PTHR10671">
    <property type="entry name" value="EPITHELIAL MEMBRANE PROTEIN-RELATED"/>
    <property type="match status" value="1"/>
</dbReference>
<dbReference type="PANTHER" id="PTHR10671:SF7">
    <property type="entry name" value="PERIPHERAL MYELIN PROTEIN 22"/>
    <property type="match status" value="1"/>
</dbReference>
<dbReference type="Pfam" id="PF00822">
    <property type="entry name" value="PMP22_Claudin"/>
    <property type="match status" value="1"/>
</dbReference>
<dbReference type="PRINTS" id="PR01453">
    <property type="entry name" value="EPMEMFAMILY"/>
</dbReference>
<dbReference type="PRINTS" id="PR01458">
    <property type="entry name" value="PMYELIN22"/>
</dbReference>
<dbReference type="PROSITE" id="PS01221">
    <property type="entry name" value="PMP22_1"/>
    <property type="match status" value="1"/>
</dbReference>
<dbReference type="PROSITE" id="PS01222">
    <property type="entry name" value="PMP22_2"/>
    <property type="match status" value="1"/>
</dbReference>
<gene>
    <name type="primary">Pmp22</name>
    <name type="synonym">Cd25</name>
    <name type="synonym">Pmp-22</name>
</gene>
<evidence type="ECO:0000250" key="1"/>
<evidence type="ECO:0000250" key="2">
    <source>
        <dbReference type="UniProtKB" id="P16646"/>
    </source>
</evidence>
<evidence type="ECO:0000255" key="3"/>
<evidence type="ECO:0000269" key="4">
    <source>
    </source>
</evidence>
<evidence type="ECO:0000305" key="5"/>
<name>PMP22_RAT</name>
<sequence length="160" mass="17946">MLLLLLGILFLHIAVLVLLFVSTIVSQWLVGNGHRTDLWQNCTTSALGAVQHCYSSSVSEWLQSVQATMILSVIFSVLSLFLFFCQLFTLTKGGRFYITGVFQILAGLCVMSAAAIYTVRHSEWHVNNDYSYGFAYILAWVAFPLALLSGIIYVILRKRE</sequence>
<protein>
    <recommendedName>
        <fullName>Peripheral myelin protein 22</fullName>
        <shortName>PMP-22</shortName>
    </recommendedName>
    <alternativeName>
        <fullName>Protein CD25</fullName>
    </alternativeName>
    <alternativeName>
        <fullName>SR13 myelin protein</fullName>
    </alternativeName>
    <alternativeName>
        <fullName>Schwann cell membrane glycoprotein</fullName>
        <shortName>SAG</shortName>
    </alternativeName>
</protein>
<keyword id="KW-0131">Cell cycle</keyword>
<keyword id="KW-1003">Cell membrane</keyword>
<keyword id="KW-0903">Direct protein sequencing</keyword>
<keyword id="KW-0325">Glycoprotein</keyword>
<keyword id="KW-0338">Growth arrest</keyword>
<keyword id="KW-0472">Membrane</keyword>
<keyword id="KW-1185">Reference proteome</keyword>
<keyword id="KW-0812">Transmembrane</keyword>
<keyword id="KW-1133">Transmembrane helix</keyword>
<keyword id="KW-0832">Ubl conjugation</keyword>